<name>WECG_YERPB</name>
<reference key="1">
    <citation type="submission" date="2008-04" db="EMBL/GenBank/DDBJ databases">
        <title>Complete sequence of Yersinia pseudotuberculosis PB1/+.</title>
        <authorList>
            <person name="Copeland A."/>
            <person name="Lucas S."/>
            <person name="Lapidus A."/>
            <person name="Glavina del Rio T."/>
            <person name="Dalin E."/>
            <person name="Tice H."/>
            <person name="Bruce D."/>
            <person name="Goodwin L."/>
            <person name="Pitluck S."/>
            <person name="Munk A.C."/>
            <person name="Brettin T."/>
            <person name="Detter J.C."/>
            <person name="Han C."/>
            <person name="Tapia R."/>
            <person name="Schmutz J."/>
            <person name="Larimer F."/>
            <person name="Land M."/>
            <person name="Hauser L."/>
            <person name="Challacombe J.F."/>
            <person name="Green L."/>
            <person name="Lindler L.E."/>
            <person name="Nikolich M.P."/>
            <person name="Richardson P."/>
        </authorList>
    </citation>
    <scope>NUCLEOTIDE SEQUENCE [LARGE SCALE GENOMIC DNA]</scope>
    <source>
        <strain>PB1/+</strain>
    </source>
</reference>
<accession>B2K060</accession>
<keyword id="KW-0328">Glycosyltransferase</keyword>
<keyword id="KW-0808">Transferase</keyword>
<dbReference type="EC" id="2.4.1.180" evidence="1"/>
<dbReference type="EMBL" id="CP001048">
    <property type="protein sequence ID" value="ACC87188.1"/>
    <property type="molecule type" value="Genomic_DNA"/>
</dbReference>
<dbReference type="RefSeq" id="WP_011191504.1">
    <property type="nucleotide sequence ID" value="NZ_CP009780.1"/>
</dbReference>
<dbReference type="SMR" id="B2K060"/>
<dbReference type="CAZy" id="GT26">
    <property type="family name" value="Glycosyltransferase Family 26"/>
</dbReference>
<dbReference type="GeneID" id="49787845"/>
<dbReference type="KEGG" id="ypb:YPTS_0191"/>
<dbReference type="PATRIC" id="fig|502801.10.peg.3868"/>
<dbReference type="UniPathway" id="UPA00566"/>
<dbReference type="GO" id="GO:0047241">
    <property type="term" value="F:lipopolysaccharide N-acetylmannosaminouronosyltransferase activity"/>
    <property type="evidence" value="ECO:0007669"/>
    <property type="project" value="UniProtKB-UniRule"/>
</dbReference>
<dbReference type="GO" id="GO:0009246">
    <property type="term" value="P:enterobacterial common antigen biosynthetic process"/>
    <property type="evidence" value="ECO:0007669"/>
    <property type="project" value="UniProtKB-UniRule"/>
</dbReference>
<dbReference type="CDD" id="cd06533">
    <property type="entry name" value="Glyco_transf_WecG_TagA"/>
    <property type="match status" value="1"/>
</dbReference>
<dbReference type="HAMAP" id="MF_01001">
    <property type="entry name" value="WecG_RffM"/>
    <property type="match status" value="1"/>
</dbReference>
<dbReference type="InterPro" id="IPR023085">
    <property type="entry name" value="UDP-ManNAcA_Trfase_WecG"/>
</dbReference>
<dbReference type="InterPro" id="IPR004629">
    <property type="entry name" value="WecG_TagA_CpsF"/>
</dbReference>
<dbReference type="NCBIfam" id="NF002980">
    <property type="entry name" value="PRK03692.1"/>
    <property type="match status" value="1"/>
</dbReference>
<dbReference type="NCBIfam" id="TIGR00696">
    <property type="entry name" value="wecG_tagA_cpsF"/>
    <property type="match status" value="1"/>
</dbReference>
<dbReference type="PANTHER" id="PTHR34136">
    <property type="match status" value="1"/>
</dbReference>
<dbReference type="PANTHER" id="PTHR34136:SF1">
    <property type="entry name" value="UDP-N-ACETYL-D-MANNOSAMINURONIC ACID TRANSFERASE"/>
    <property type="match status" value="1"/>
</dbReference>
<dbReference type="Pfam" id="PF03808">
    <property type="entry name" value="Glyco_tran_WecG"/>
    <property type="match status" value="1"/>
</dbReference>
<gene>
    <name evidence="1" type="primary">wecG</name>
    <name evidence="1" type="synonym">rffM</name>
    <name type="ordered locus">YPTS_0191</name>
</gene>
<sequence length="246" mass="27646">MEPNTVIPKYNVRGFEIWGFRDMAQVLDHLLGSGPVKTGTLVAMNAEKLLKAEDDTALCELIKNAEYLYADGISMVRAIRRKYPQAELSRVAGADLWEALMQRAGQQGTPVFLVGGKPDVLAETEAKLRAQWNVNLVGSQDGYFTPEQREALFARIAASGAAIVTVAMGSPKQEIFMRDCRKFYPDALYMGVGGTYDVFTGHVKRAPKIWQNMGLEWLYRLLAQPSRIRRQLKLLKFVGYYYSGRL</sequence>
<organism>
    <name type="scientific">Yersinia pseudotuberculosis serotype IB (strain PB1/+)</name>
    <dbReference type="NCBI Taxonomy" id="502801"/>
    <lineage>
        <taxon>Bacteria</taxon>
        <taxon>Pseudomonadati</taxon>
        <taxon>Pseudomonadota</taxon>
        <taxon>Gammaproteobacteria</taxon>
        <taxon>Enterobacterales</taxon>
        <taxon>Yersiniaceae</taxon>
        <taxon>Yersinia</taxon>
    </lineage>
</organism>
<comment type="function">
    <text evidence="1">Catalyzes the synthesis of Und-PP-GlcNAc-ManNAcA (Lipid II), the second lipid-linked intermediate involved in enterobacterial common antigen (ECA) synthesis.</text>
</comment>
<comment type="catalytic activity">
    <reaction evidence="1">
        <text>UDP-N-acetyl-alpha-D-mannosaminouronate + N-acetyl-alpha-D-glucosaminyl-di-trans,octa-cis-undecaprenyl diphosphate = beta-D-ManNAcA-(1-&gt;4)-alpha-D-GlcNAc-di-trans,octa-cis-undecaprenyl diphosphate + UDP + H(+)</text>
        <dbReference type="Rhea" id="RHEA:28366"/>
        <dbReference type="ChEBI" id="CHEBI:15378"/>
        <dbReference type="ChEBI" id="CHEBI:58223"/>
        <dbReference type="ChEBI" id="CHEBI:61495"/>
        <dbReference type="ChEBI" id="CHEBI:62959"/>
        <dbReference type="ChEBI" id="CHEBI:70731"/>
        <dbReference type="EC" id="2.4.1.180"/>
    </reaction>
</comment>
<comment type="pathway">
    <text evidence="1">Bacterial outer membrane biogenesis; enterobacterial common antigen biosynthesis.</text>
</comment>
<comment type="similarity">
    <text evidence="1">Belongs to the glycosyltransferase 26 family.</text>
</comment>
<feature type="chain" id="PRO_1000134591" description="UDP-N-acetyl-D-mannosaminuronic acid transferase">
    <location>
        <begin position="1"/>
        <end position="246"/>
    </location>
</feature>
<evidence type="ECO:0000255" key="1">
    <source>
        <dbReference type="HAMAP-Rule" id="MF_01001"/>
    </source>
</evidence>
<proteinExistence type="inferred from homology"/>
<protein>
    <recommendedName>
        <fullName evidence="1">UDP-N-acetyl-D-mannosaminuronic acid transferase</fullName>
        <shortName evidence="1">UDP-ManNAcA transferase</shortName>
        <ecNumber evidence="1">2.4.1.180</ecNumber>
    </recommendedName>
</protein>